<feature type="chain" id="PRO_1000200509" description="Uridine kinase">
    <location>
        <begin position="1"/>
        <end position="209"/>
    </location>
</feature>
<feature type="binding site" evidence="1">
    <location>
        <begin position="12"/>
        <end position="19"/>
    </location>
    <ligand>
        <name>ATP</name>
        <dbReference type="ChEBI" id="CHEBI:30616"/>
    </ligand>
</feature>
<accession>B8G8N0</accession>
<name>URK_CHLAD</name>
<dbReference type="EC" id="2.7.1.48" evidence="1"/>
<dbReference type="EMBL" id="CP001337">
    <property type="protein sequence ID" value="ACL24292.1"/>
    <property type="molecule type" value="Genomic_DNA"/>
</dbReference>
<dbReference type="RefSeq" id="WP_012616656.1">
    <property type="nucleotide sequence ID" value="NC_011831.1"/>
</dbReference>
<dbReference type="SMR" id="B8G8N0"/>
<dbReference type="STRING" id="326427.Cagg_1385"/>
<dbReference type="KEGG" id="cag:Cagg_1385"/>
<dbReference type="eggNOG" id="COG0572">
    <property type="taxonomic scope" value="Bacteria"/>
</dbReference>
<dbReference type="HOGENOM" id="CLU_021278_1_2_0"/>
<dbReference type="OrthoDB" id="9777642at2"/>
<dbReference type="UniPathway" id="UPA00574">
    <property type="reaction ID" value="UER00637"/>
</dbReference>
<dbReference type="UniPathway" id="UPA00579">
    <property type="reaction ID" value="UER00640"/>
</dbReference>
<dbReference type="Proteomes" id="UP000002508">
    <property type="component" value="Chromosome"/>
</dbReference>
<dbReference type="GO" id="GO:0005737">
    <property type="term" value="C:cytoplasm"/>
    <property type="evidence" value="ECO:0007669"/>
    <property type="project" value="UniProtKB-SubCell"/>
</dbReference>
<dbReference type="GO" id="GO:0005524">
    <property type="term" value="F:ATP binding"/>
    <property type="evidence" value="ECO:0007669"/>
    <property type="project" value="UniProtKB-UniRule"/>
</dbReference>
<dbReference type="GO" id="GO:0043771">
    <property type="term" value="F:cytidine kinase activity"/>
    <property type="evidence" value="ECO:0007669"/>
    <property type="project" value="RHEA"/>
</dbReference>
<dbReference type="GO" id="GO:0004849">
    <property type="term" value="F:uridine kinase activity"/>
    <property type="evidence" value="ECO:0007669"/>
    <property type="project" value="UniProtKB-UniRule"/>
</dbReference>
<dbReference type="GO" id="GO:0044211">
    <property type="term" value="P:CTP salvage"/>
    <property type="evidence" value="ECO:0007669"/>
    <property type="project" value="UniProtKB-UniRule"/>
</dbReference>
<dbReference type="GO" id="GO:0044206">
    <property type="term" value="P:UMP salvage"/>
    <property type="evidence" value="ECO:0007669"/>
    <property type="project" value="UniProtKB-UniRule"/>
</dbReference>
<dbReference type="CDD" id="cd02023">
    <property type="entry name" value="UMPK"/>
    <property type="match status" value="1"/>
</dbReference>
<dbReference type="Gene3D" id="3.40.50.300">
    <property type="entry name" value="P-loop containing nucleotide triphosphate hydrolases"/>
    <property type="match status" value="1"/>
</dbReference>
<dbReference type="HAMAP" id="MF_00551">
    <property type="entry name" value="Uridine_kinase"/>
    <property type="match status" value="1"/>
</dbReference>
<dbReference type="InterPro" id="IPR027417">
    <property type="entry name" value="P-loop_NTPase"/>
</dbReference>
<dbReference type="InterPro" id="IPR006083">
    <property type="entry name" value="PRK/URK"/>
</dbReference>
<dbReference type="InterPro" id="IPR026008">
    <property type="entry name" value="Uridine_kinase"/>
</dbReference>
<dbReference type="InterPro" id="IPR000764">
    <property type="entry name" value="Uridine_kinase-like"/>
</dbReference>
<dbReference type="NCBIfam" id="NF004018">
    <property type="entry name" value="PRK05480.1"/>
    <property type="match status" value="1"/>
</dbReference>
<dbReference type="NCBIfam" id="TIGR00235">
    <property type="entry name" value="udk"/>
    <property type="match status" value="1"/>
</dbReference>
<dbReference type="PANTHER" id="PTHR10285">
    <property type="entry name" value="URIDINE KINASE"/>
    <property type="match status" value="1"/>
</dbReference>
<dbReference type="Pfam" id="PF00485">
    <property type="entry name" value="PRK"/>
    <property type="match status" value="1"/>
</dbReference>
<dbReference type="PRINTS" id="PR00988">
    <property type="entry name" value="URIDINKINASE"/>
</dbReference>
<dbReference type="SUPFAM" id="SSF52540">
    <property type="entry name" value="P-loop containing nucleoside triphosphate hydrolases"/>
    <property type="match status" value="1"/>
</dbReference>
<comment type="catalytic activity">
    <reaction evidence="1">
        <text>uridine + ATP = UMP + ADP + H(+)</text>
        <dbReference type="Rhea" id="RHEA:16825"/>
        <dbReference type="ChEBI" id="CHEBI:15378"/>
        <dbReference type="ChEBI" id="CHEBI:16704"/>
        <dbReference type="ChEBI" id="CHEBI:30616"/>
        <dbReference type="ChEBI" id="CHEBI:57865"/>
        <dbReference type="ChEBI" id="CHEBI:456216"/>
        <dbReference type="EC" id="2.7.1.48"/>
    </reaction>
</comment>
<comment type="catalytic activity">
    <reaction evidence="1">
        <text>cytidine + ATP = CMP + ADP + H(+)</text>
        <dbReference type="Rhea" id="RHEA:24674"/>
        <dbReference type="ChEBI" id="CHEBI:15378"/>
        <dbReference type="ChEBI" id="CHEBI:17562"/>
        <dbReference type="ChEBI" id="CHEBI:30616"/>
        <dbReference type="ChEBI" id="CHEBI:60377"/>
        <dbReference type="ChEBI" id="CHEBI:456216"/>
        <dbReference type="EC" id="2.7.1.48"/>
    </reaction>
</comment>
<comment type="pathway">
    <text evidence="1">Pyrimidine metabolism; CTP biosynthesis via salvage pathway; CTP from cytidine: step 1/3.</text>
</comment>
<comment type="pathway">
    <text evidence="1">Pyrimidine metabolism; UMP biosynthesis via salvage pathway; UMP from uridine: step 1/1.</text>
</comment>
<comment type="subcellular location">
    <subcellularLocation>
        <location evidence="1">Cytoplasm</location>
    </subcellularLocation>
</comment>
<comment type="similarity">
    <text evidence="1">Belongs to the uridine kinase family.</text>
</comment>
<gene>
    <name evidence="1" type="primary">udk</name>
    <name type="ordered locus">Cagg_1385</name>
</gene>
<keyword id="KW-0067">ATP-binding</keyword>
<keyword id="KW-0963">Cytoplasm</keyword>
<keyword id="KW-0418">Kinase</keyword>
<keyword id="KW-0547">Nucleotide-binding</keyword>
<keyword id="KW-0808">Transferase</keyword>
<proteinExistence type="inferred from homology"/>
<organism>
    <name type="scientific">Chloroflexus aggregans (strain MD-66 / DSM 9485)</name>
    <dbReference type="NCBI Taxonomy" id="326427"/>
    <lineage>
        <taxon>Bacteria</taxon>
        <taxon>Bacillati</taxon>
        <taxon>Chloroflexota</taxon>
        <taxon>Chloroflexia</taxon>
        <taxon>Chloroflexales</taxon>
        <taxon>Chloroflexineae</taxon>
        <taxon>Chloroflexaceae</taxon>
        <taxon>Chloroflexus</taxon>
    </lineage>
</organism>
<sequence length="209" mass="23722">MQFNPIIIGVAGGSASGKTSVAQAILQRVGADRIAHIDHDRYYKDLSHLPLEERARFNFDHPDALDNDLLVAHLDALCAGQAVDLPTYDYATYVRLPYTERIEPRPVILVEGILIFYEPVLRRRMHIKLFVDTDADLRFIRRLRRDIAERGRSVESVIEQYLATVRPMHLEFVEPTKRYADVIFPGGGRNPIAIDMVVARIEAALQSMA</sequence>
<protein>
    <recommendedName>
        <fullName evidence="1">Uridine kinase</fullName>
        <ecNumber evidence="1">2.7.1.48</ecNumber>
    </recommendedName>
    <alternativeName>
        <fullName evidence="1">Cytidine monophosphokinase</fullName>
    </alternativeName>
    <alternativeName>
        <fullName evidence="1">Uridine monophosphokinase</fullName>
    </alternativeName>
</protein>
<evidence type="ECO:0000255" key="1">
    <source>
        <dbReference type="HAMAP-Rule" id="MF_00551"/>
    </source>
</evidence>
<reference key="1">
    <citation type="submission" date="2008-12" db="EMBL/GenBank/DDBJ databases">
        <title>Complete sequence of Chloroflexus aggregans DSM 9485.</title>
        <authorList>
            <consortium name="US DOE Joint Genome Institute"/>
            <person name="Lucas S."/>
            <person name="Copeland A."/>
            <person name="Lapidus A."/>
            <person name="Glavina del Rio T."/>
            <person name="Dalin E."/>
            <person name="Tice H."/>
            <person name="Pitluck S."/>
            <person name="Foster B."/>
            <person name="Larimer F."/>
            <person name="Land M."/>
            <person name="Hauser L."/>
            <person name="Kyrpides N."/>
            <person name="Mikhailova N."/>
            <person name="Bryant D.A."/>
            <person name="Richardson P."/>
        </authorList>
    </citation>
    <scope>NUCLEOTIDE SEQUENCE [LARGE SCALE GENOMIC DNA]</scope>
    <source>
        <strain>MD-66 / DSM 9485</strain>
    </source>
</reference>